<accession>Q8JJX1</accession>
<protein>
    <recommendedName>
        <fullName>Polyprotein P1234</fullName>
        <shortName>P1234</shortName>
    </recommendedName>
    <alternativeName>
        <fullName>Non-structural polyprotein</fullName>
    </alternativeName>
    <component>
        <recommendedName>
            <fullName>Polyprotein P123</fullName>
            <shortName>P123</shortName>
        </recommendedName>
    </component>
    <component>
        <recommendedName>
            <fullName>mRNA-capping enzyme nsP1</fullName>
            <ecNumber evidence="4">2.1.1.-</ecNumber>
            <ecNumber evidence="4">2.7.7.-</ecNumber>
        </recommendedName>
        <alternativeName>
            <fullName>Non-structural protein 1</fullName>
        </alternativeName>
    </component>
    <component>
        <recommendedName>
            <fullName>Protease nsP2</fullName>
            <ecNumber evidence="6">3.4.22.-</ecNumber>
            <ecNumber evidence="6">3.6.1.15</ecNumber>
            <ecNumber evidence="3">3.6.1.74</ecNumber>
            <ecNumber evidence="6">3.6.4.13</ecNumber>
        </recommendedName>
        <alternativeName>
            <fullName>Non-structural protein 2</fullName>
            <shortName>nsP2</shortName>
        </alternativeName>
    </component>
    <component>
        <recommendedName>
            <fullName>Non-structural protein 3</fullName>
            <shortName>nsP3</shortName>
            <ecNumber evidence="6">3.1.3.84</ecNumber>
        </recommendedName>
    </component>
    <component>
        <recommendedName>
            <fullName>RNA-directed RNA polymerase nsP4</fullName>
            <ecNumber evidence="2">2.7.7.19</ecNumber>
            <ecNumber evidence="9">2.7.7.48</ecNumber>
        </recommendedName>
        <alternativeName>
            <fullName>Non-structural protein 4</fullName>
            <shortName>nsP4</shortName>
        </alternativeName>
    </component>
</protein>
<evidence type="ECO:0000250" key="1">
    <source>
        <dbReference type="UniProtKB" id="O90370"/>
    </source>
</evidence>
<evidence type="ECO:0000250" key="2">
    <source>
        <dbReference type="UniProtKB" id="P03317"/>
    </source>
</evidence>
<evidence type="ECO:0000250" key="3">
    <source>
        <dbReference type="UniProtKB" id="P08411"/>
    </source>
</evidence>
<evidence type="ECO:0000250" key="4">
    <source>
        <dbReference type="UniProtKB" id="P27282"/>
    </source>
</evidence>
<evidence type="ECO:0000250" key="5">
    <source>
        <dbReference type="UniProtKB" id="P36328"/>
    </source>
</evidence>
<evidence type="ECO:0000250" key="6">
    <source>
        <dbReference type="UniProtKB" id="Q8JUX6"/>
    </source>
</evidence>
<evidence type="ECO:0000255" key="7"/>
<evidence type="ECO:0000255" key="8">
    <source>
        <dbReference type="PROSITE-ProRule" id="PRU00490"/>
    </source>
</evidence>
<evidence type="ECO:0000255" key="9">
    <source>
        <dbReference type="PROSITE-ProRule" id="PRU00539"/>
    </source>
</evidence>
<evidence type="ECO:0000255" key="10">
    <source>
        <dbReference type="PROSITE-ProRule" id="PRU00853"/>
    </source>
</evidence>
<evidence type="ECO:0000255" key="11">
    <source>
        <dbReference type="PROSITE-ProRule" id="PRU00990"/>
    </source>
</evidence>
<evidence type="ECO:0000255" key="12">
    <source>
        <dbReference type="PROSITE-ProRule" id="PRU01079"/>
    </source>
</evidence>
<evidence type="ECO:0000256" key="13">
    <source>
        <dbReference type="SAM" id="MobiDB-lite"/>
    </source>
</evidence>
<evidence type="ECO:0000269" key="14">
    <source>
    </source>
</evidence>
<evidence type="ECO:0000305" key="15"/>
<organismHost>
    <name type="scientific">Oncorhynchus mykiss</name>
    <name type="common">Rainbow trout</name>
    <name type="synonym">Salmo gairdneri</name>
    <dbReference type="NCBI Taxonomy" id="8022"/>
</organismHost>
<organismHost>
    <name type="scientific">Salmo salar</name>
    <name type="common">Atlantic salmon</name>
    <dbReference type="NCBI Taxonomy" id="8030"/>
</organismHost>
<organism>
    <name type="scientific">Alphavirus salmon subtype 1</name>
    <name type="common">SAV1</name>
    <name type="synonym">Salmon pancreas disease virus subtype 1</name>
    <dbReference type="NCBI Taxonomy" id="84589"/>
    <lineage>
        <taxon>Viruses</taxon>
        <taxon>Riboviria</taxon>
        <taxon>Orthornavirae</taxon>
        <taxon>Kitrinoviricota</taxon>
        <taxon>Alsuviricetes</taxon>
        <taxon>Martellivirales</taxon>
        <taxon>Togaviridae</taxon>
        <taxon>Alphavirus</taxon>
    </lineage>
</organism>
<keyword id="KW-0067">ATP-binding</keyword>
<keyword id="KW-1262">Eukaryotic host gene expression shutoff by virus</keyword>
<keyword id="KW-1191">Eukaryotic host transcription shutoff by virus</keyword>
<keyword id="KW-0342">GTP-binding</keyword>
<keyword id="KW-0347">Helicase</keyword>
<keyword id="KW-1032">Host cell membrane</keyword>
<keyword id="KW-1034">Host cell projection</keyword>
<keyword id="KW-1035">Host cytoplasm</keyword>
<keyword id="KW-1036">Host cytoplasmic vesicle</keyword>
<keyword id="KW-1190">Host gene expression shutoff by virus</keyword>
<keyword id="KW-1043">Host membrane</keyword>
<keyword id="KW-1048">Host nucleus</keyword>
<keyword id="KW-0945">Host-virus interaction</keyword>
<keyword id="KW-0378">Hydrolase</keyword>
<keyword id="KW-1104">Inhibition of host RNA polymerase II by virus</keyword>
<keyword id="KW-0449">Lipoprotein</keyword>
<keyword id="KW-0472">Membrane</keyword>
<keyword id="KW-0479">Metal-binding</keyword>
<keyword id="KW-0489">Methyltransferase</keyword>
<keyword id="KW-0506">mRNA capping</keyword>
<keyword id="KW-0507">mRNA processing</keyword>
<keyword id="KW-0511">Multifunctional enzyme</keyword>
<keyword id="KW-0547">Nucleotide-binding</keyword>
<keyword id="KW-0548">Nucleotidyltransferase</keyword>
<keyword id="KW-0564">Palmitate</keyword>
<keyword id="KW-0645">Protease</keyword>
<keyword id="KW-1159">RNA suppression of termination</keyword>
<keyword id="KW-0694">RNA-binding</keyword>
<keyword id="KW-0696">RNA-directed RNA polymerase</keyword>
<keyword id="KW-0949">S-adenosyl-L-methionine</keyword>
<keyword id="KW-0788">Thiol protease</keyword>
<keyword id="KW-0808">Transferase</keyword>
<keyword id="KW-0832">Ubl conjugation</keyword>
<keyword id="KW-0693">Viral RNA replication</keyword>
<keyword id="KW-0862">Zinc</keyword>
<feature type="chain" id="PRO_0000308407" description="Polyprotein P1234">
    <location>
        <begin position="1"/>
        <end position="2601"/>
    </location>
</feature>
<feature type="chain" id="PRO_0000228796" description="Polyprotein P123">
    <location>
        <begin position="1"/>
        <end position="1992"/>
    </location>
</feature>
<feature type="chain" id="PRO_0000228797" description="mRNA-capping enzyme nsP1">
    <location>
        <begin position="1"/>
        <end position="562"/>
    </location>
</feature>
<feature type="chain" id="PRO_0000228798" description="Protease nsP2">
    <location>
        <begin position="563"/>
        <end position="1421"/>
    </location>
</feature>
<feature type="chain" id="PRO_0000228799" description="Non-structural protein 3">
    <location>
        <begin position="1422"/>
        <end position="1992"/>
    </location>
</feature>
<feature type="chain" id="PRO_0000228800" description="RNA-directed RNA polymerase nsP4">
    <location>
        <begin position="1993"/>
        <end position="2601"/>
    </location>
</feature>
<feature type="domain" description="Alphavirus-like MT" evidence="12">
    <location>
        <begin position="39"/>
        <end position="275"/>
    </location>
</feature>
<feature type="domain" description="(+)RNA virus helicase ATP-binding" evidence="11">
    <location>
        <begin position="719"/>
        <end position="872"/>
    </location>
</feature>
<feature type="domain" description="(+)RNA virus helicase C-terminal" evidence="11">
    <location>
        <begin position="873"/>
        <end position="1021"/>
    </location>
</feature>
<feature type="domain" description="Peptidase C9" evidence="10">
    <location>
        <begin position="1035"/>
        <end position="1393"/>
    </location>
</feature>
<feature type="domain" description="Macro" evidence="8">
    <location>
        <begin position="1422"/>
        <end position="1581"/>
    </location>
</feature>
<feature type="region of interest" description="NsP1 membrane-binding" evidence="3">
    <location>
        <begin position="260"/>
        <end position="279"/>
    </location>
</feature>
<feature type="region of interest" description="Nucleolus localization signal" evidence="3">
    <location>
        <begin position="1035"/>
        <end position="1055"/>
    </location>
</feature>
<feature type="region of interest" description="Disordered" evidence="13">
    <location>
        <begin position="1781"/>
        <end position="1914"/>
    </location>
</feature>
<feature type="region of interest" description="Disordered" evidence="13">
    <location>
        <begin position="1934"/>
        <end position="2014"/>
    </location>
</feature>
<feature type="short sequence motif" description="Nuclear export signal" evidence="4">
    <location>
        <begin position="1089"/>
        <end position="1098"/>
    </location>
</feature>
<feature type="short sequence motif" description="Nuclear localization signal" evidence="3">
    <location>
        <begin position="1219"/>
        <end position="1223"/>
    </location>
</feature>
<feature type="compositionally biased region" description="Low complexity" evidence="13">
    <location>
        <begin position="1781"/>
        <end position="1802"/>
    </location>
</feature>
<feature type="compositionally biased region" description="Low complexity" evidence="13">
    <location>
        <begin position="1821"/>
        <end position="1883"/>
    </location>
</feature>
<feature type="compositionally biased region" description="Low complexity" evidence="13">
    <location>
        <begin position="1947"/>
        <end position="1961"/>
    </location>
</feature>
<feature type="compositionally biased region" description="Polar residues" evidence="13">
    <location>
        <begin position="1996"/>
        <end position="2014"/>
    </location>
</feature>
<feature type="active site" description="For cysteine protease nsP2 activity" evidence="10">
    <location>
        <position position="1044"/>
    </location>
</feature>
<feature type="active site" description="For cysteine protease nsP2 activity" evidence="10">
    <location>
        <position position="1114"/>
    </location>
</feature>
<feature type="binding site" evidence="11">
    <location>
        <begin position="751"/>
        <end position="758"/>
    </location>
    <ligand>
        <name>a ribonucleoside 5'-triphosphate</name>
        <dbReference type="ChEBI" id="CHEBI:61557"/>
    </ligand>
</feature>
<feature type="binding site" evidence="7">
    <location>
        <begin position="751"/>
        <end position="758"/>
    </location>
    <ligand>
        <name>ATP</name>
        <dbReference type="ChEBI" id="CHEBI:30616"/>
    </ligand>
</feature>
<feature type="binding site" evidence="6">
    <location>
        <position position="1445"/>
    </location>
    <ligand>
        <name>ADP-D-ribose</name>
        <dbReference type="ChEBI" id="CHEBI:57967"/>
    </ligand>
</feature>
<feature type="binding site" evidence="6">
    <location>
        <position position="1453"/>
    </location>
    <ligand>
        <name>ADP-D-ribose</name>
        <dbReference type="ChEBI" id="CHEBI:57967"/>
    </ligand>
</feature>
<feature type="binding site" evidence="5">
    <location>
        <position position="1534"/>
    </location>
    <ligand>
        <name>ADP-D-ribose</name>
        <dbReference type="ChEBI" id="CHEBI:57967"/>
    </ligand>
</feature>
<feature type="binding site" evidence="5">
    <location>
        <position position="1535"/>
    </location>
    <ligand>
        <name>ADP-D-ribose</name>
        <dbReference type="ChEBI" id="CHEBI:57967"/>
    </ligand>
</feature>
<feature type="binding site" evidence="2">
    <location>
        <position position="1702"/>
    </location>
    <ligand>
        <name>Zn(2+)</name>
        <dbReference type="ChEBI" id="CHEBI:29105"/>
    </ligand>
</feature>
<feature type="binding site" evidence="2">
    <location>
        <position position="1704"/>
    </location>
    <ligand>
        <name>Zn(2+)</name>
        <dbReference type="ChEBI" id="CHEBI:29105"/>
    </ligand>
</feature>
<feature type="binding site" evidence="2">
    <location>
        <position position="1727"/>
    </location>
    <ligand>
        <name>Zn(2+)</name>
        <dbReference type="ChEBI" id="CHEBI:29105"/>
    </ligand>
</feature>
<feature type="binding site" evidence="2">
    <location>
        <position position="1745"/>
    </location>
    <ligand>
        <name>Zn(2+)</name>
        <dbReference type="ChEBI" id="CHEBI:29105"/>
    </ligand>
</feature>
<feature type="site" description="Involved in the phosphoramide link with 7-methyl-GMP" evidence="4">
    <location>
        <position position="48"/>
    </location>
</feature>
<feature type="site" description="Cleavage; by protease nsP2" evidence="2">
    <location>
        <begin position="562"/>
        <end position="563"/>
    </location>
</feature>
<feature type="site" description="Cleavage; by protease nsP2" evidence="2">
    <location>
        <begin position="1421"/>
        <end position="1422"/>
    </location>
</feature>
<feature type="site" description="Cleavage; by protease nsP2" evidence="6">
    <location>
        <begin position="1992"/>
        <end position="1993"/>
    </location>
</feature>
<feature type="lipid moiety-binding region" description="S-palmitoyl cysteine; by host" evidence="6">
    <location>
        <position position="437"/>
    </location>
</feature>
<feature type="lipid moiety-binding region" description="S-palmitoyl cysteine; by host" evidence="6">
    <location>
        <position position="439"/>
    </location>
</feature>
<sequence length="2601" mass="285752">MMQNLTANPSAGATVTVNLPADHPALNQFKTAFPGFEVVASNRSSNDHAAARAFSHLATKWIERDIGGRQVIVADIGSAPARRIGAPDNVTYHSVCPRKCAEDPERLASYARKLVRAVERGDGHLVNEKITDLKDVLENPDTSLETTSICLNDDVSCKVKADIAVYQDVYAVDAPSTIYAQADKGTRVVYWIGFEPFVFHTDAMAGSFPLYDANWSDSAVLAAKNLPLCYSGLSEDSIKWRFRFRDKPLVPSGEIHYSVGSTHYVEDRDKLKSWHLPSTFHFVAPNKYTCRCDTVVSCGGYVVKKITICEGIVGIPAKEELATSYHRDGVVVTKFSDTINHEQVSFPVVTYIPAVICDQMTAMTANPVKYSDAVKLLVGLNQRIVVNGTTVRNVNSMDNSLIPVFARALCSWADEVRRDMEDEQDLYGITSVTTWICICRAYDKRQQHTFYRRPKQSSGIYVPAKFTGSLRAALSATYLNLPLKQLLLNTLKRAIKPMDQAIADETEALAHDAAEVHELTEEERRQQAANPSYIADVLGQDDDEEEAGDGMSDVDLGEEDGAGATIIDCQRGTVKVITAFGDNMMGEYLVLSPVTVLRTRKLAILLGPLAEEVMQYVHKGRTGRYAIEKNNLKVLIPTGVSLKTDHFQALAESATLTYNDYLFTCRTLDQLATRGSARNTDEVYYKLVDAAKARDEYVYELSSKQCVKKEDATGTVLQGDICNPPYHQFAYEALRKRPAHTHDVHTIGIYGVPGAGKTAIITTEVTTRDLVASGKKENCEDIKRCVLERRGLKIAARTVDSLFYGAYRGAVNTLYVDEAYACHSGTLLALIAAVRPTGKVVLCGDPKQVGCVNQLQMRMHYNHEISDRVLRKNISRRCTHTLTAIVSNLNYEGRMKTTNPCKKPVLIDTTGSTKPDKEALVLTCFRGWVKDLKFLYPHNELMTAAASQGLTREKVYAVRCRVTTNPLYEPTSEHITVLLTRTNDELVWKTLPNDPLIPILSKPPKGDYSATMEDWEDEHNGILAALREACVPRMNFAHGKRNTCWAVTSSRVLHEAGVQITPEDYNRIFPAFREDKPHSALAALDAVATLVWGLDTSSGILSGKGSFMRLENSHWSNSNRGYEYGLNLDALEGYEIANPRMIKALKQRRGRECYDIETGKLVPLDPARVQVPINRIVPHVLVDTSAAAKPGFLENRLTVDRWDQVHSFKTRAAVKFAELTKRVSYNSVLDLGAAPGGVTDYCVKKGKTVTSVSEQWDTKPRGAVVVTADINGPLNNLGIFDLVFCDAAGPRRYHHYAQCEDHAVLFTSACKHGVERTAKGGVFIVKAYGMADRRTERAVEGTARYFRSVSVEKPVSSRITNVEVFFKFSGRCRPHARSIAHLGPQLTDIYARTWKAYKMLARGSVADKVKVAEILNSMVGAAPGYRVLNRNIITAEEEVLVNAANSNGRPGDGVCGALYGAFGDAFPNGAIGAGNAVLVRGLEATIIHAAGADFREVDEETGARQLRAAYRAAATLVTANGITSAAIPLLSTHIFSNGRNRLEQSFSALVEAFDTTECDVTIYCLANNMAARIQQLIDAHAREEFDEEVVVEEEEEHEADAMSDTETLSSFGDETVWVPKHSTLAGRPGYSAYYGDRRSLFVGTKFHRAAVAMSSIEAAWPKTKEANAKLIEYIRGQHLVDVLKSCPVDDIPVGRPPSSLPCGCIYAMTPERVTVLKQRPQEGFVVCSAFKLPLTNIQDVTKVECTVRAPAEEPRPVRHLQERRPAQAAVRQLRPAAVAASVAASHTASRTSTASSRRTPAPGSVQVRLLPPRDGTESRSSRMGSQSSVTSSAGSVPPAPRRAPAVSAASLASSAHSRSVRSAPAMRAASAGARSVRSAQSGSTGHRAGAFSVAGSVRQPSGPPSSVSTPAAIRGLTRDQFDAVRVRARRNLELEGSEHGSQSSFHSGSLAVGSSASSYSQRSDDQDTGTEPSSRGAAVRTRRRGQRDGLGGYIFSSDQGTAHLSQHNTQTNNTTEVLMRTSVLPSNDHGTPDLPAETRKRLAYQMRPTQKNKSRYLSAKVHNMKHKIVRCLQRGAGHYLREQHALPLWKNTFPKPRYSDACVVKFESVNTAIVAANMFIGCNYPTLSSFGITDKYDAYLDMVDGLNCNLDTVTFDPAKVRSLPKKSEYNQPLIQSQVPGPMTSTLQSILMAATKRNCNVTQMRELPTMDSAAMNVEAFKSFACKDTDLWTEFAEKPVRLSPGQIEEYVFHLQGAKANVMHSRVEAVCPDLSEVAMDRFTLDMKRDVKVTPGTKHVEERPKVQEIQAADPMATAYLCAIHRELVRRLKAVLKPSIHVLFDMSSEDFDAIVGHGMKLGDKVLETDISSFDKSQDQAMAVTALMLLRDLGVEEDLLTLIEASFGDITSAHLPTGTRFQFGSMMKSGLFLTLFVNTLLNITIAARVLREQLADTRCAAFIGDDNVITGVVSDDMMVARCASWLNMEVKIMDMEIGNMSPYFCGGFLLLDTVTGTVSRVSDPVKRLMKMGKPALNDPETDVDRCRALREEVESWYRVGIQWPLQVAAATRYGVNHLPLATMAMATLAQDLRSYLGARGEYVSLYV</sequence>
<reference key="1">
    <citation type="journal article" date="2002" name="J. Virol.">
        <title>Comparison of two aquatic alphaviruses, Salmon pancreas disease virus and Sleeping disease virus, by using genome sequence analysis, monoclonal reactivity and cross-infection.</title>
        <authorList>
            <person name="Weston J.H."/>
            <person name="Villoing S."/>
            <person name="Bremont M."/>
            <person name="Castric J."/>
            <person name="Pfeffer M."/>
            <person name="Jewhurst V."/>
            <person name="McLoughlin M."/>
            <person name="Rodseth O."/>
            <person name="Christie K.E."/>
            <person name="Koumans J."/>
            <person name="Todd D."/>
        </authorList>
    </citation>
    <scope>NUCLEOTIDE SEQUENCE [GENOMIC RNA]</scope>
</reference>
<comment type="function">
    <molecule>Polyprotein P1234</molecule>
    <text evidence="6">Inactive precursor of the viral replicase, which is activated by cleavages carried out by the viral protease nsP2.</text>
</comment>
<comment type="function">
    <molecule>Polyprotein P123</molecule>
    <text evidence="2">The early replication complex formed by the polyprotein P123 and nsP4 synthesizes minus-strand RNAs (By similarity). As soon P123 is cleaved into mature proteins, the plus-strand RNAs synthesis begins (By similarity).</text>
</comment>
<comment type="function">
    <molecule>Polyprotein P123</molecule>
    <text evidence="15">The early replication complex formed by the polyprotein P123 and nsP4 synthesizes minus-strand RNAs (Probable). Polyprotein P123 is a short-lived polyprotein that accumulates during early stage of infection (Probable). As soon P123 is cleaved into mature proteins, the plus-strand RNAs synthesis begins (Probable).</text>
</comment>
<comment type="function">
    <molecule>mRNA-capping enzyme nsP1</molecule>
    <text evidence="2 3 4 6 15">Cytoplasmic capping enzyme that catalyzes two virus-specific reactions: methyltransferase and nsP1 guanylyltransferase (By similarity). mRNA-capping is necessary since all viral RNAs are synthesized in the cytoplasm, and host capping enzymes are restricted to the nucleus (Probable). The enzymatic reaction involves a covalent link between 7-methyl-GMP and nsP1, whereas eukaryotic capping enzymes form a covalent complex only with GMP (Probable). nsP1 capping consists in the following reactions: GTP is first methylated into 7-methyl-GMP and then is covalently linked to nsP1 to form the m7GMp-nsP1 complex from which 7-methyl-GMP complex is transferred to the mRNA to create the cap structure (By similarity). NsP1 is also needed for the initiation of the minus-strand RNAs synthesis (By similarity). Probably serves as a membrane anchor for the replication complex composed of nsP1-nsP4 (By similarity). Palmitoylated nsP1 is remodeling host cell cytoskeleton, and induces filopodium-like structure formation at the surface of the host cell (By similarity).</text>
</comment>
<comment type="function">
    <molecule>Protease nsP2</molecule>
    <text evidence="2 3 6">Multifunctional protein whose N-terminus is part of the RNA polymerase complex and displays NTPase, RNA triphosphatase and helicase activities (By similarity). NTPase and RNA triphosphatase are involved in viral RNA capping and helicase keeps a check on the dsRNA replication intermediates (By similarity). The C-terminus harbors a protease that specifically cleaves the polyproteins and releases the mature proteins (By similarity). Required for the shutoff of minus-strand RNAs synthesis (By similarity). Specifically inhibits the host IFN response by promoting the nuclear export of host STAT1 (By similarity). Also inhibits host transcription by inducing the rapid proteasome-dependent degradation of POLR2A, a catalytic subunit of the RNAPII complex (By similarity). The resulting inhibition of cellular protein synthesis serves to ensure maximal viral gene expression and to evade host immune response (By similarity).</text>
</comment>
<comment type="function">
    <molecule>Non-structural protein 3</molecule>
    <text evidence="2 6">Seems to be essential for minus-strand RNAs and subgenomic 26S mRNAs synthesis (By similarity). Displays mono-ADP-ribosylhydrolase activity (By similarity). ADP-ribosylation is a post-translational modification that controls various processes of the host cell and the virus probably needs to revert it for optimal viral replication (By similarity). Binds proteins of G3BP family and sequesters them into the viral RNA replication complexes thereby inhibiting the formation of host stress granules on viral mRNAs (By similarity). The nsp3-G3BP complexes bind viral RNAs and probably orchestrate the assembly of viral replication complexes, thanks to the ability of G3BP family members to self-assemble and bind DNA (By similarity).</text>
</comment>
<comment type="function">
    <molecule>RNA-directed RNA polymerase nsP4</molecule>
    <text evidence="2">RNA dependent RNA polymerase (By similarity). Replicates genomic and antigenomic RNA by recognizing replications specific signals. The early replication complex formed by the polyprotein P123 and nsP4 synthesizes minus-strand RNAs (By similarity). The late replication complex composed of fully processed nsP1-nsP4 is responsible for the production of genomic and subgenomic plus-strand RNAs (By similarity).</text>
</comment>
<comment type="catalytic activity">
    <reaction evidence="4">
        <text>GTP + S-adenosyl-L-methionine = N(7)-methyl-GTP + S-adenosyl-L-homocysteine</text>
        <dbReference type="Rhea" id="RHEA:46948"/>
        <dbReference type="ChEBI" id="CHEBI:37565"/>
        <dbReference type="ChEBI" id="CHEBI:57856"/>
        <dbReference type="ChEBI" id="CHEBI:59789"/>
        <dbReference type="ChEBI" id="CHEBI:87133"/>
    </reaction>
</comment>
<comment type="catalytic activity">
    <reaction evidence="4">
        <text>N(7)-methyl-GTP + L-histidyl-[protein] = N(tele)-(N(7)-methylguanosine 5'-phospho)-L-histidyl-[protein] + diphosphate</text>
        <dbReference type="Rhea" id="RHEA:54792"/>
        <dbReference type="Rhea" id="RHEA-COMP:9745"/>
        <dbReference type="Rhea" id="RHEA-COMP:13995"/>
        <dbReference type="ChEBI" id="CHEBI:29979"/>
        <dbReference type="ChEBI" id="CHEBI:33019"/>
        <dbReference type="ChEBI" id="CHEBI:87133"/>
        <dbReference type="ChEBI" id="CHEBI:138334"/>
    </reaction>
    <physiologicalReaction direction="left-to-right" evidence="4">
        <dbReference type="Rhea" id="RHEA:54793"/>
    </physiologicalReaction>
</comment>
<comment type="catalytic activity">
    <reaction evidence="4">
        <text>N(tele)-(N(7)-methylguanosine 5'-phospho)-L-histidyl-[protein] + a 5'-end diphospho-(purine-ribonucleoside) in mRNA + H(+) = a 5'-end (N(7)-methyl 5'-triphosphoguanosine)-(purine-ribonucleoside) in mRNA + L-histidyl-[protein]</text>
        <dbReference type="Rhea" id="RHEA:54800"/>
        <dbReference type="Rhea" id="RHEA-COMP:9745"/>
        <dbReference type="Rhea" id="RHEA-COMP:12925"/>
        <dbReference type="Rhea" id="RHEA-COMP:13929"/>
        <dbReference type="Rhea" id="RHEA-COMP:13995"/>
        <dbReference type="ChEBI" id="CHEBI:15378"/>
        <dbReference type="ChEBI" id="CHEBI:29979"/>
        <dbReference type="ChEBI" id="CHEBI:133968"/>
        <dbReference type="ChEBI" id="CHEBI:138276"/>
        <dbReference type="ChEBI" id="CHEBI:138334"/>
    </reaction>
</comment>
<comment type="catalytic activity">
    <reaction evidence="3">
        <text>a 5'-end triphospho-ribonucleoside in mRNA + H2O = a 5'-end diphospho-ribonucleoside in mRNA + phosphate + H(+)</text>
        <dbReference type="Rhea" id="RHEA:67004"/>
        <dbReference type="Rhea" id="RHEA-COMP:17164"/>
        <dbReference type="Rhea" id="RHEA-COMP:17165"/>
        <dbReference type="ChEBI" id="CHEBI:15377"/>
        <dbReference type="ChEBI" id="CHEBI:15378"/>
        <dbReference type="ChEBI" id="CHEBI:43474"/>
        <dbReference type="ChEBI" id="CHEBI:167616"/>
        <dbReference type="ChEBI" id="CHEBI:167618"/>
        <dbReference type="EC" id="3.6.1.74"/>
    </reaction>
    <physiologicalReaction direction="left-to-right" evidence="3">
        <dbReference type="Rhea" id="RHEA:67005"/>
    </physiologicalReaction>
</comment>
<comment type="catalytic activity">
    <reaction evidence="6">
        <text>a ribonucleoside 5'-triphosphate + H2O = a ribonucleoside 5'-diphosphate + phosphate + H(+)</text>
        <dbReference type="Rhea" id="RHEA:23680"/>
        <dbReference type="ChEBI" id="CHEBI:15377"/>
        <dbReference type="ChEBI" id="CHEBI:15378"/>
        <dbReference type="ChEBI" id="CHEBI:43474"/>
        <dbReference type="ChEBI" id="CHEBI:57930"/>
        <dbReference type="ChEBI" id="CHEBI:61557"/>
        <dbReference type="EC" id="3.6.1.15"/>
    </reaction>
</comment>
<comment type="catalytic activity">
    <reaction evidence="6">
        <text>ATP + H2O = ADP + phosphate + H(+)</text>
        <dbReference type="Rhea" id="RHEA:13065"/>
        <dbReference type="ChEBI" id="CHEBI:15377"/>
        <dbReference type="ChEBI" id="CHEBI:15378"/>
        <dbReference type="ChEBI" id="CHEBI:30616"/>
        <dbReference type="ChEBI" id="CHEBI:43474"/>
        <dbReference type="ChEBI" id="CHEBI:456216"/>
        <dbReference type="EC" id="3.6.4.13"/>
    </reaction>
</comment>
<comment type="catalytic activity">
    <reaction evidence="9">
        <text>RNA(n) + a ribonucleoside 5'-triphosphate = RNA(n+1) + diphosphate</text>
        <dbReference type="Rhea" id="RHEA:21248"/>
        <dbReference type="Rhea" id="RHEA-COMP:14527"/>
        <dbReference type="Rhea" id="RHEA-COMP:17342"/>
        <dbReference type="ChEBI" id="CHEBI:33019"/>
        <dbReference type="ChEBI" id="CHEBI:61557"/>
        <dbReference type="ChEBI" id="CHEBI:140395"/>
        <dbReference type="EC" id="2.7.7.48"/>
    </reaction>
</comment>
<comment type="catalytic activity">
    <reaction evidence="6">
        <text>4-O-(ADP-D-ribosyl)-L-aspartyl-[protein] + H2O = L-aspartyl-[protein] + ADP-D-ribose + H(+)</text>
        <dbReference type="Rhea" id="RHEA:54428"/>
        <dbReference type="Rhea" id="RHEA-COMP:9867"/>
        <dbReference type="Rhea" id="RHEA-COMP:13832"/>
        <dbReference type="ChEBI" id="CHEBI:15377"/>
        <dbReference type="ChEBI" id="CHEBI:15378"/>
        <dbReference type="ChEBI" id="CHEBI:29961"/>
        <dbReference type="ChEBI" id="CHEBI:57967"/>
        <dbReference type="ChEBI" id="CHEBI:138102"/>
    </reaction>
    <physiologicalReaction direction="left-to-right" evidence="6">
        <dbReference type="Rhea" id="RHEA:54429"/>
    </physiologicalReaction>
</comment>
<comment type="catalytic activity">
    <reaction evidence="6">
        <text>5-O-(ADP-D-ribosyl)-L-glutamyl-[protein] + H2O = L-glutamyl-[protein] + ADP-D-ribose + H(+)</text>
        <dbReference type="Rhea" id="RHEA:58248"/>
        <dbReference type="Rhea" id="RHEA-COMP:10208"/>
        <dbReference type="Rhea" id="RHEA-COMP:15089"/>
        <dbReference type="ChEBI" id="CHEBI:15377"/>
        <dbReference type="ChEBI" id="CHEBI:15378"/>
        <dbReference type="ChEBI" id="CHEBI:29973"/>
        <dbReference type="ChEBI" id="CHEBI:57967"/>
        <dbReference type="ChEBI" id="CHEBI:142540"/>
    </reaction>
    <physiologicalReaction direction="left-to-right" evidence="6">
        <dbReference type="Rhea" id="RHEA:58249"/>
    </physiologicalReaction>
</comment>
<comment type="catalytic activity">
    <reaction evidence="2">
        <text>RNA(n) + ATP = RNA(n)-3'-adenine ribonucleotide + diphosphate</text>
        <dbReference type="Rhea" id="RHEA:11332"/>
        <dbReference type="Rhea" id="RHEA-COMP:14527"/>
        <dbReference type="Rhea" id="RHEA-COMP:17347"/>
        <dbReference type="ChEBI" id="CHEBI:30616"/>
        <dbReference type="ChEBI" id="CHEBI:33019"/>
        <dbReference type="ChEBI" id="CHEBI:140395"/>
        <dbReference type="ChEBI" id="CHEBI:173115"/>
        <dbReference type="EC" id="2.7.7.19"/>
    </reaction>
</comment>
<comment type="catalytic activity">
    <reaction evidence="6">
        <text>ADP-alpha-D-ribose 1''-phosphate + H2O = ADP-D-ribose + phosphate</text>
        <dbReference type="Rhea" id="RHEA:25029"/>
        <dbReference type="ChEBI" id="CHEBI:15377"/>
        <dbReference type="ChEBI" id="CHEBI:43474"/>
        <dbReference type="ChEBI" id="CHEBI:57967"/>
        <dbReference type="ChEBI" id="CHEBI:58753"/>
        <dbReference type="EC" id="3.1.3.84"/>
    </reaction>
    <physiologicalReaction direction="left-to-right" evidence="6">
        <dbReference type="Rhea" id="RHEA:25030"/>
    </physiologicalReaction>
</comment>
<comment type="cofactor">
    <cofactor evidence="2">
        <name>Mg(2+)</name>
        <dbReference type="ChEBI" id="CHEBI:18420"/>
    </cofactor>
    <cofactor evidence="2">
        <name>Mn(2+)</name>
        <dbReference type="ChEBI" id="CHEBI:29035"/>
    </cofactor>
    <text evidence="2">For nsP4 adenylyltransferase activity; Mn(2+) supports catalysis at 60% of the levels observed with Mg(2+).</text>
</comment>
<comment type="cofactor">
    <cofactor>
        <name>Mg(2+)</name>
        <dbReference type="ChEBI" id="CHEBI:18420"/>
    </cofactor>
    <text evidence="2">For nsP4 RNA-directed RNA polymerase activity.</text>
</comment>
<comment type="cofactor">
    <cofactor evidence="4">
        <name>Mg(2+)</name>
        <dbReference type="ChEBI" id="CHEBI:18420"/>
    </cofactor>
    <text evidence="4">For nsP1 guanylylation.</text>
</comment>
<comment type="cofactor">
    <cofactor>
        <name>Mg(2+)</name>
        <dbReference type="ChEBI" id="CHEBI:18420"/>
    </cofactor>
    <text evidence="6">For nsP2 RNA triphosphatase activity.</text>
</comment>
<comment type="cofactor">
    <cofactor>
        <name>Mg(2+)</name>
        <dbReference type="ChEBI" id="CHEBI:18420"/>
    </cofactor>
    <text evidence="6">For nsP2 NTPase activity.</text>
</comment>
<comment type="subunit">
    <molecule>mRNA-capping enzyme nsP1</molecule>
    <text evidence="4 6">Interacts with non-structural protein 3 (By similarity). Interacts with RNA-directed RNA polymerase nsP4 (By similarity). Interacts with protease nsP2 (By similarity). interacts with itself (By similarity).</text>
</comment>
<comment type="subunit">
    <molecule>Non-structural protein 3</molecule>
    <text evidence="4 6">Interacts with mRNA-capping enzyme nsP1 (By similarity). Interacts with host DDX1 (By similarity). Interacts with host DDX3 (By similarity).</text>
</comment>
<comment type="subunit">
    <molecule>RNA-directed RNA polymerase nsP4</molecule>
    <text evidence="4 6">Interacts with mRNA-capping enzyme nsP1 (By similarity). Interacts with protease nsP2 (By similarity). interacts with itself (By similarity).</text>
</comment>
<comment type="subunit">
    <molecule>Protease nsP2</molecule>
    <text evidence="4 6">Interacts with RNA-directed RNA polymerase nsP4 (By similarity). Interacts with mRNA-capping enzyme nsP1 (By similarity). Interacts with KPNA1/karyopherin-alpha1; this interaction probably allows the active transport of protease nsP2 into the host nucleus (By similarity).</text>
</comment>
<comment type="subcellular location">
    <molecule>Polyprotein P1234</molecule>
    <subcellularLocation>
        <location evidence="15">Host cytoplasmic vesicle membrane</location>
        <topology evidence="15">Peripheral membrane protein</topology>
    </subcellularLocation>
    <text evidence="15">Part of cytoplasmic vesicles, which are probably formed at the plasma membrane and internalized leading to late endosomal/lysosomal spherules containing the replication complex.</text>
</comment>
<comment type="subcellular location">
    <molecule>Polyprotein P123</molecule>
    <subcellularLocation>
        <location evidence="15">Host cytoplasmic vesicle membrane</location>
        <topology evidence="15">Peripheral membrane protein</topology>
    </subcellularLocation>
    <text evidence="15">Part of cytoplasmic vesicles, which are probably formed at the plasma membrane and internalized leading to late endosomal/lysosomal spherules containing the replication complex.</text>
</comment>
<comment type="subcellular location">
    <molecule>mRNA-capping enzyme nsP1</molecule>
    <subcellularLocation>
        <location evidence="3">Host cytoplasmic vesicle membrane</location>
        <topology evidence="3">Lipid-anchor</topology>
    </subcellularLocation>
    <subcellularLocation>
        <location evidence="3">Host cell membrane</location>
        <topology evidence="3">Lipid-anchor</topology>
        <orientation evidence="3">Cytoplasmic side</orientation>
    </subcellularLocation>
    <subcellularLocation>
        <location evidence="6">Host cell projection</location>
        <location evidence="6">Host filopodium</location>
    </subcellularLocation>
    <text evidence="3 6">In the late phase of infection, the polyprotein is quickly cleaved before localization to cellular membranes. Then a fraction of nsP1 localizes to the inner surface of the plasma membrane and its filopodial extensions. Only the palmitoylated nsP1 localizes to the host filopodia (By similarity). NsP1 is also part of cytoplasmic vesicles, which are probably formed at the plasma membrane and internalized leading to late endosomal/lysosomal spherules containing the replication complex (By similarity).</text>
</comment>
<comment type="subcellular location">
    <molecule>Protease nsP2</molecule>
    <subcellularLocation>
        <location evidence="3">Host cytoplasmic vesicle membrane</location>
        <topology evidence="3">Peripheral membrane protein</topology>
    </subcellularLocation>
    <subcellularLocation>
        <location evidence="4">Host nucleus</location>
    </subcellularLocation>
    <subcellularLocation>
        <location evidence="4">Host cytoplasm</location>
    </subcellularLocation>
    <text evidence="3 4">In the late phase of infection, the polyprotein is quickly cleaved before localization to cellular membranes. Then approximately half of nsP2 is found in the nucleus (By similarity). Shuttles between cytoplasm and nucleus (By similarity). NsP2 is also part of cytoplasmic vesicles, which are probably formed at the plasma membrane and internalized leading to late endosomal/lysosomal spherules containing the replication complex (By similarity).</text>
</comment>
<comment type="subcellular location">
    <molecule>Non-structural protein 3</molecule>
    <subcellularLocation>
        <location evidence="2">Host cytoplasmic vesicle membrane</location>
        <topology evidence="15">Peripheral membrane protein</topology>
    </subcellularLocation>
    <text evidence="2">In the late phase of infection, the polyprotein is quickly cleaved before localization to cellular membranes. Then nsP3 forms aggregates in cytoplasm (By similarity). NsP3 is also part of cytoplasmic vesicles, which are probably formed at the plasma membrane and internalized leading to late endosomal/lysosomal spherules containing the replication complex (By similarity).</text>
</comment>
<comment type="subcellular location">
    <molecule>RNA-directed RNA polymerase nsP4</molecule>
    <subcellularLocation>
        <location>Host cytoplasmic vesicle membrane</location>
        <topology evidence="3">Peripheral membrane protein</topology>
    </subcellularLocation>
    <text evidence="3">NsP4 is part of cytoplasmic vesicles, which are probably formed at the plasma membrane and internalized leading to late endosomal/lysosomal spherules containing the replication complex.</text>
</comment>
<comment type="domain">
    <molecule>Protease nsP2</molecule>
    <text evidence="4 6">The N-terminus exhibits NTPase and RNA triphosphatase activities and is proposed to have helicase activity, whereas the C-terminus possesses protease activity (By similarity). Contains a nuclear localization signal and a nuclear export signal, these two motifs are probably involved in the shuttling between the cytoplasm and the nucleus of nsP2 (By similarity). The C-terminus is required for promoting the export of host STAT1 (By similarity).</text>
</comment>
<comment type="domain">
    <molecule>Non-structural protein 3</molecule>
    <text evidence="2 6">In the N-terminus, the macro domain displays a mono-ADP-ribosylhydrolase activity (By similarity). The central part has a zinc-binding function (By similarity).</text>
</comment>
<comment type="PTM">
    <molecule>Polyprotein P1234</molecule>
    <text evidence="2">Specific enzymatic cleavages in vivo yield mature proteins (By similarity). The processing of the polyprotein is temporally regulated (By similarity). In early stages (1.7 hpi), P1234 is first cleaved in trans through its nsP2 protease activity, releasing P123 and nsP4, which associate to form the early replication complex (By similarity). At the same time, P1234 is also cut at the nsP1/nsP2 site early in infection but with lower efficiency (By similarity). After replication of the viral minus-strand RNAs (4 hpi), the polyproteins are cut at the nsP1/nsP2 and nsP2/nsP3 sites very efficiently, preventing accumulation of P123 and P1234 and allowing the formation of the late replication complex (By similarity). NsP3/nsP4 site is not cleaved anymore and P34 is produced rather than nsP4 (By similarity).</text>
</comment>
<comment type="PTM">
    <molecule>Polyprotein P123</molecule>
    <text evidence="2">Specific enzymatic cleavages in vivo yield mature proteins (By similarity). The processing of the polyprotein is temporally regulated (By similarity). In early stages (1.7 hpi), P123 is cleaved at the nsP1/nsP2 site with low efficiency (By similarity). After replication of the viral minus-strand RNAs (4 hpi), the polyproteins are cut at the nsP1/nsP2 and nsP2/nsP3 sites very efficiently, preventing accumulation of P123 and allowing the formation of the late replication complex (By similarity).</text>
</comment>
<comment type="PTM">
    <molecule>mRNA-capping enzyme nsP1</molecule>
    <text evidence="6">Palmitoylated by host palmitoyltransferases ZDHHC2 and ZDHHC19.</text>
</comment>
<comment type="PTM">
    <molecule>Non-structural protein 3</molecule>
    <text evidence="3">Phosphorylated by host on serines and threonines.</text>
</comment>
<comment type="PTM">
    <molecule>RNA-directed RNA polymerase nsP4</molecule>
    <text evidence="2">Ubiquitinated; targets the protein for rapid degradation via the ubiquitin system (By similarity). Nsp4 is present in extremely low quantities due to low frequency of translation through the amber stop-codon and the degradation by the ubiquitin pathway (By similarity).</text>
</comment>
<comment type="miscellaneous">
    <text evidence="2">Viral replication produces dsRNA in the late phase of infection, resulting in a strong activation of host EIF2AK2/PKR, leading to almost complete phosphorylation of EIF2A (By similarity). This inactivates completely cellular translation initiation, resulting shutoff of host proteins synthesis (By similarity). However, phosphorylation of EIF2A is probably not the only mechanism responsible for the host translation shutoff (By similarity). The viral translation can still occur normally because it relies on a hairpin structure in the coding region of sgRNA and is EIF2A-, EIF2D-, EIF4G- EIF4A-independent (By similarity).</text>
</comment>
<comment type="caution">
    <text evidence="1 14">There is no stop codon readthrough before nsP4 (PubMed:12021349). The opal termination codon has probably been mutated to a sense codon on passage in cell culture (By similarity). The presence of the opal codon may be a requirement for viral maintenance in both vertebrate and invertebrate hosts and a selective advantage may be conferred in cell culture for the sense codon (By similarity).</text>
</comment>
<name>POLN_SAV1</name>
<proteinExistence type="inferred from homology"/>
<dbReference type="EC" id="2.1.1.-" evidence="4"/>
<dbReference type="EC" id="2.7.7.-" evidence="4"/>
<dbReference type="EC" id="3.4.22.-" evidence="6"/>
<dbReference type="EC" id="3.6.1.15" evidence="6"/>
<dbReference type="EC" id="3.6.1.74" evidence="3"/>
<dbReference type="EC" id="3.6.4.13" evidence="6"/>
<dbReference type="EC" id="3.1.3.84" evidence="6"/>
<dbReference type="EC" id="2.7.7.19" evidence="2"/>
<dbReference type="EC" id="2.7.7.48" evidence="9"/>
<dbReference type="EMBL" id="AJ316244">
    <property type="protein sequence ID" value="CAC87721.1"/>
    <property type="molecule type" value="Genomic_RNA"/>
</dbReference>
<dbReference type="RefSeq" id="NP_647496.1">
    <property type="nucleotide sequence ID" value="NC_003930.1"/>
</dbReference>
<dbReference type="SMR" id="Q8JJX1"/>
<dbReference type="GeneID" id="2193531"/>
<dbReference type="KEGG" id="vg:2193531"/>
<dbReference type="Proteomes" id="UP000007227">
    <property type="component" value="Genome"/>
</dbReference>
<dbReference type="GO" id="GO:0044162">
    <property type="term" value="C:host cell cytoplasmic vesicle membrane"/>
    <property type="evidence" value="ECO:0007669"/>
    <property type="project" value="UniProtKB-SubCell"/>
</dbReference>
<dbReference type="GO" id="GO:0044176">
    <property type="term" value="C:host cell filopodium"/>
    <property type="evidence" value="ECO:0007669"/>
    <property type="project" value="UniProtKB-SubCell"/>
</dbReference>
<dbReference type="GO" id="GO:0042025">
    <property type="term" value="C:host cell nucleus"/>
    <property type="evidence" value="ECO:0007669"/>
    <property type="project" value="UniProtKB-SubCell"/>
</dbReference>
<dbReference type="GO" id="GO:0020002">
    <property type="term" value="C:host cell plasma membrane"/>
    <property type="evidence" value="ECO:0007669"/>
    <property type="project" value="UniProtKB-SubCell"/>
</dbReference>
<dbReference type="GO" id="GO:0016020">
    <property type="term" value="C:membrane"/>
    <property type="evidence" value="ECO:0007669"/>
    <property type="project" value="UniProtKB-KW"/>
</dbReference>
<dbReference type="GO" id="GO:0005524">
    <property type="term" value="F:ATP binding"/>
    <property type="evidence" value="ECO:0007669"/>
    <property type="project" value="UniProtKB-KW"/>
</dbReference>
<dbReference type="GO" id="GO:0016887">
    <property type="term" value="F:ATP hydrolysis activity"/>
    <property type="evidence" value="ECO:0007669"/>
    <property type="project" value="RHEA"/>
</dbReference>
<dbReference type="GO" id="GO:0008234">
    <property type="term" value="F:cysteine-type peptidase activity"/>
    <property type="evidence" value="ECO:0007669"/>
    <property type="project" value="UniProtKB-KW"/>
</dbReference>
<dbReference type="GO" id="GO:0005525">
    <property type="term" value="F:GTP binding"/>
    <property type="evidence" value="ECO:0007669"/>
    <property type="project" value="UniProtKB-KW"/>
</dbReference>
<dbReference type="GO" id="GO:0046872">
    <property type="term" value="F:metal ion binding"/>
    <property type="evidence" value="ECO:0007669"/>
    <property type="project" value="UniProtKB-KW"/>
</dbReference>
<dbReference type="GO" id="GO:0140818">
    <property type="term" value="F:mRNA 5'-triphosphate monophosphatase activity"/>
    <property type="evidence" value="ECO:0007669"/>
    <property type="project" value="RHEA"/>
</dbReference>
<dbReference type="GO" id="GO:0008174">
    <property type="term" value="F:mRNA methyltransferase activity"/>
    <property type="evidence" value="ECO:0007669"/>
    <property type="project" value="InterPro"/>
</dbReference>
<dbReference type="GO" id="GO:1990817">
    <property type="term" value="F:poly(A) RNA polymerase activity"/>
    <property type="evidence" value="ECO:0007669"/>
    <property type="project" value="UniProtKB-EC"/>
</dbReference>
<dbReference type="GO" id="GO:0004651">
    <property type="term" value="F:polynucleotide 5'-phosphatase activity"/>
    <property type="evidence" value="ECO:0007669"/>
    <property type="project" value="UniProtKB-EC"/>
</dbReference>
<dbReference type="GO" id="GO:0003723">
    <property type="term" value="F:RNA binding"/>
    <property type="evidence" value="ECO:0007669"/>
    <property type="project" value="UniProtKB-KW"/>
</dbReference>
<dbReference type="GO" id="GO:0003724">
    <property type="term" value="F:RNA helicase activity"/>
    <property type="evidence" value="ECO:0007669"/>
    <property type="project" value="UniProtKB-EC"/>
</dbReference>
<dbReference type="GO" id="GO:0003968">
    <property type="term" value="F:RNA-directed RNA polymerase activity"/>
    <property type="evidence" value="ECO:0007669"/>
    <property type="project" value="UniProtKB-KW"/>
</dbReference>
<dbReference type="GO" id="GO:0006370">
    <property type="term" value="P:7-methylguanosine mRNA capping"/>
    <property type="evidence" value="ECO:0007669"/>
    <property type="project" value="UniProtKB-KW"/>
</dbReference>
<dbReference type="GO" id="GO:0006351">
    <property type="term" value="P:DNA-templated transcription"/>
    <property type="evidence" value="ECO:0007669"/>
    <property type="project" value="InterPro"/>
</dbReference>
<dbReference type="GO" id="GO:0032259">
    <property type="term" value="P:methylation"/>
    <property type="evidence" value="ECO:0007669"/>
    <property type="project" value="UniProtKB-KW"/>
</dbReference>
<dbReference type="GO" id="GO:0016556">
    <property type="term" value="P:mRNA modification"/>
    <property type="evidence" value="ECO:0007669"/>
    <property type="project" value="InterPro"/>
</dbReference>
<dbReference type="GO" id="GO:0006508">
    <property type="term" value="P:proteolysis"/>
    <property type="evidence" value="ECO:0007669"/>
    <property type="project" value="UniProtKB-KW"/>
</dbReference>
<dbReference type="GO" id="GO:0039657">
    <property type="term" value="P:symbiont-mediated suppression of host gene expression"/>
    <property type="evidence" value="ECO:0007669"/>
    <property type="project" value="UniProtKB-KW"/>
</dbReference>
<dbReference type="GO" id="GO:0039523">
    <property type="term" value="P:symbiont-mediated suppression of host mRNA transcription via inhibition of RNA polymerase II activity"/>
    <property type="evidence" value="ECO:0007669"/>
    <property type="project" value="UniProtKB-KW"/>
</dbReference>
<dbReference type="GO" id="GO:0039694">
    <property type="term" value="P:viral RNA genome replication"/>
    <property type="evidence" value="ECO:0007669"/>
    <property type="project" value="InterPro"/>
</dbReference>
<dbReference type="CDD" id="cd21557">
    <property type="entry name" value="Macro_X_Nsp3-like"/>
    <property type="match status" value="1"/>
</dbReference>
<dbReference type="FunFam" id="3.40.220.10:FF:000015">
    <property type="entry name" value="Polyprotein P1234"/>
    <property type="match status" value="1"/>
</dbReference>
<dbReference type="Gene3D" id="3.90.70.110">
    <property type="entry name" value="Alphavirus nsP2 protease domain"/>
    <property type="match status" value="1"/>
</dbReference>
<dbReference type="Gene3D" id="3.40.220.10">
    <property type="entry name" value="Leucine Aminopeptidase, subunit E, domain 1"/>
    <property type="match status" value="1"/>
</dbReference>
<dbReference type="Gene3D" id="3.40.50.300">
    <property type="entry name" value="P-loop containing nucleotide triphosphate hydrolases"/>
    <property type="match status" value="2"/>
</dbReference>
<dbReference type="Gene3D" id="3.40.50.150">
    <property type="entry name" value="Vaccinia Virus protein VP39"/>
    <property type="match status" value="1"/>
</dbReference>
<dbReference type="InterPro" id="IPR027351">
    <property type="entry name" value="(+)RNA_virus_helicase_core_dom"/>
</dbReference>
<dbReference type="InterPro" id="IPR002588">
    <property type="entry name" value="Alphavirus-like_MT_dom"/>
</dbReference>
<dbReference type="InterPro" id="IPR002620">
    <property type="entry name" value="Alphavirus_nsp2pro"/>
</dbReference>
<dbReference type="InterPro" id="IPR044936">
    <property type="entry name" value="Alphavirus_nsp2pro_sf"/>
</dbReference>
<dbReference type="InterPro" id="IPR043502">
    <property type="entry name" value="DNA/RNA_pol_sf"/>
</dbReference>
<dbReference type="InterPro" id="IPR002589">
    <property type="entry name" value="Macro_dom"/>
</dbReference>
<dbReference type="InterPro" id="IPR043472">
    <property type="entry name" value="Macro_dom-like"/>
</dbReference>
<dbReference type="InterPro" id="IPR044371">
    <property type="entry name" value="Macro_X_NSP3-like"/>
</dbReference>
<dbReference type="InterPro" id="IPR048891">
    <property type="entry name" value="nsP3_ZBD"/>
</dbReference>
<dbReference type="InterPro" id="IPR027417">
    <property type="entry name" value="P-loop_NTPase"/>
</dbReference>
<dbReference type="InterPro" id="IPR001788">
    <property type="entry name" value="RNA-dep_RNA_pol_alsuvir"/>
</dbReference>
<dbReference type="InterPro" id="IPR007094">
    <property type="entry name" value="RNA-dir_pol_PSvirus"/>
</dbReference>
<dbReference type="InterPro" id="IPR002877">
    <property type="entry name" value="RNA_MeTrfase_FtsJ_dom"/>
</dbReference>
<dbReference type="InterPro" id="IPR029063">
    <property type="entry name" value="SAM-dependent_MTases_sf"/>
</dbReference>
<dbReference type="InterPro" id="IPR049329">
    <property type="entry name" value="ToMV_Hel_N"/>
</dbReference>
<dbReference type="Pfam" id="PF01728">
    <property type="entry name" value="FtsJ"/>
    <property type="match status" value="1"/>
</dbReference>
<dbReference type="Pfam" id="PF01661">
    <property type="entry name" value="Macro"/>
    <property type="match status" value="1"/>
</dbReference>
<dbReference type="Pfam" id="PF20852">
    <property type="entry name" value="nsP3_ZBD"/>
    <property type="match status" value="1"/>
</dbReference>
<dbReference type="Pfam" id="PF01707">
    <property type="entry name" value="Peptidase_C9"/>
    <property type="match status" value="1"/>
</dbReference>
<dbReference type="Pfam" id="PF00978">
    <property type="entry name" value="RdRP_2"/>
    <property type="match status" value="1"/>
</dbReference>
<dbReference type="Pfam" id="PF20896">
    <property type="entry name" value="ToMV_Hel_N"/>
    <property type="match status" value="1"/>
</dbReference>
<dbReference type="Pfam" id="PF01443">
    <property type="entry name" value="Viral_helicase1"/>
    <property type="match status" value="1"/>
</dbReference>
<dbReference type="Pfam" id="PF01660">
    <property type="entry name" value="Vmethyltransf"/>
    <property type="match status" value="1"/>
</dbReference>
<dbReference type="SMART" id="SM00506">
    <property type="entry name" value="A1pp"/>
    <property type="match status" value="1"/>
</dbReference>
<dbReference type="SUPFAM" id="SSF56672">
    <property type="entry name" value="DNA/RNA polymerases"/>
    <property type="match status" value="1"/>
</dbReference>
<dbReference type="SUPFAM" id="SSF52949">
    <property type="entry name" value="Macro domain-like"/>
    <property type="match status" value="1"/>
</dbReference>
<dbReference type="SUPFAM" id="SSF52540">
    <property type="entry name" value="P-loop containing nucleoside triphosphate hydrolases"/>
    <property type="match status" value="1"/>
</dbReference>
<dbReference type="SUPFAM" id="SSF53335">
    <property type="entry name" value="S-adenosyl-L-methionine-dependent methyltransferases"/>
    <property type="match status" value="1"/>
</dbReference>
<dbReference type="PROSITE" id="PS51743">
    <property type="entry name" value="ALPHAVIRUS_MT"/>
    <property type="match status" value="1"/>
</dbReference>
<dbReference type="PROSITE" id="PS51154">
    <property type="entry name" value="MACRO"/>
    <property type="match status" value="1"/>
</dbReference>
<dbReference type="PROSITE" id="PS51520">
    <property type="entry name" value="NSP2PRO"/>
    <property type="match status" value="1"/>
</dbReference>
<dbReference type="PROSITE" id="PS51657">
    <property type="entry name" value="PSRV_HELICASE"/>
    <property type="match status" value="1"/>
</dbReference>
<dbReference type="PROSITE" id="PS50507">
    <property type="entry name" value="RDRP_SSRNA_POS"/>
    <property type="match status" value="1"/>
</dbReference>